<sequence length="766" mass="85256">MSVYKPGIAPIKAQFLRTAWPARSEALDGSTETGADSEPTAFVPDDEPDGKPEQENPTDAAAPTTSSGANRAQDGEQDKPRKRARGQNKGRTFTRTEDNIALCTQIATGRDACKFGDSCKFTHDLCTYLEQKPRDIETPPHPVSSHECVRFVPADERDVYLATLYEHAVMQDTKRIKKNTDVTADAHPASGSTTPSAPTAPTTHDTVQASVVLGTTCPYFQERGTCPMGWKCRFLGAHVRRLSASCRVLGAEAQGMLGTGLELVEDEAKKHAWLHRSPYMRNEAQPESDQVNWLASDVARRLRSRKYTFDKAPAITSALRKEVDMLSAMTPAEAASTEVGKGPLRVNYEHERLVADPSATLEACEDALRNGGNDDAAADTARVRPCEKRRLQWKGDLYLAPLTTTGNLPFRRLCASFGSDIHCGEMGMAESFLQGHASEWSLVRRWEGERIFGTQVCGAKPELLVPTAEVLAREVGRGLDFVDVNCGCPIDLVYNKGAGSALLDHANKLGRIVRGMSEALGEIPLTIKLRTGTTSKPTTHKIFARAQTEWGVGGLSLHGRSRKQRYKNDADWAYIRTCVDTLHDAVRTWNEEPQHADEPDMVPVPVYGNGDVYGWRDYYDHLEHAHVDGTMIARGALIKPWIFTEIKERRDWDISSRERLDMIRQYASYGLTHWGSDTQGVNTTRRFLCEMLSFTHRYVPLGLLDHIPVRMNDRPPPFHGRDPLESLLSSPSAHDWVRISDMFLGPAPPDWHFTPKHRSNAYEQQG</sequence>
<dbReference type="EC" id="1.3.1.89" evidence="1"/>
<dbReference type="EC" id="1.3.1.-" evidence="3"/>
<dbReference type="EMBL" id="AAYY01000001">
    <property type="protein sequence ID" value="EDP45431.1"/>
    <property type="molecule type" value="Genomic_DNA"/>
</dbReference>
<dbReference type="RefSeq" id="XP_001732645.1">
    <property type="nucleotide sequence ID" value="XM_001732593.1"/>
</dbReference>
<dbReference type="SMR" id="A8PTG4"/>
<dbReference type="FunCoup" id="A8PTG4">
    <property type="interactions" value="412"/>
</dbReference>
<dbReference type="STRING" id="425265.A8PTG4"/>
<dbReference type="GeneID" id="5856951"/>
<dbReference type="KEGG" id="mgl:MGL_0420"/>
<dbReference type="VEuPathDB" id="FungiDB:MGL_0420"/>
<dbReference type="InParanoid" id="A8PTG4"/>
<dbReference type="OMA" id="WSYIAEC"/>
<dbReference type="OrthoDB" id="259935at2759"/>
<dbReference type="Proteomes" id="UP000008837">
    <property type="component" value="Unassembled WGS sequence"/>
</dbReference>
<dbReference type="GO" id="GO:0005737">
    <property type="term" value="C:cytoplasm"/>
    <property type="evidence" value="ECO:0007669"/>
    <property type="project" value="UniProtKB-SubCell"/>
</dbReference>
<dbReference type="GO" id="GO:0005634">
    <property type="term" value="C:nucleus"/>
    <property type="evidence" value="ECO:0007669"/>
    <property type="project" value="UniProtKB-SubCell"/>
</dbReference>
<dbReference type="GO" id="GO:0050660">
    <property type="term" value="F:flavin adenine dinucleotide binding"/>
    <property type="evidence" value="ECO:0007669"/>
    <property type="project" value="InterPro"/>
</dbReference>
<dbReference type="GO" id="GO:0106414">
    <property type="term" value="F:mRNA dihydrouridine synthase activity"/>
    <property type="evidence" value="ECO:0007669"/>
    <property type="project" value="RHEA"/>
</dbReference>
<dbReference type="GO" id="GO:0003723">
    <property type="term" value="F:RNA binding"/>
    <property type="evidence" value="ECO:0007669"/>
    <property type="project" value="TreeGrafter"/>
</dbReference>
<dbReference type="GO" id="GO:0102265">
    <property type="term" value="F:tRNA-dihydrouridine47 synthase activity"/>
    <property type="evidence" value="ECO:0007669"/>
    <property type="project" value="UniProtKB-EC"/>
</dbReference>
<dbReference type="GO" id="GO:0008270">
    <property type="term" value="F:zinc ion binding"/>
    <property type="evidence" value="ECO:0007669"/>
    <property type="project" value="UniProtKB-KW"/>
</dbReference>
<dbReference type="GO" id="GO:0006397">
    <property type="term" value="P:mRNA processing"/>
    <property type="evidence" value="ECO:0007669"/>
    <property type="project" value="UniProtKB-KW"/>
</dbReference>
<dbReference type="CDD" id="cd02801">
    <property type="entry name" value="DUS_like_FMN"/>
    <property type="match status" value="1"/>
</dbReference>
<dbReference type="Gene3D" id="3.20.20.70">
    <property type="entry name" value="Aldolase class I"/>
    <property type="match status" value="1"/>
</dbReference>
<dbReference type="InterPro" id="IPR013785">
    <property type="entry name" value="Aldolase_TIM"/>
</dbReference>
<dbReference type="InterPro" id="IPR035587">
    <property type="entry name" value="DUS-like_FMN-bd"/>
</dbReference>
<dbReference type="InterPro" id="IPR018517">
    <property type="entry name" value="tRNA_hU_synthase_CS"/>
</dbReference>
<dbReference type="InterPro" id="IPR000571">
    <property type="entry name" value="Znf_CCCH"/>
</dbReference>
<dbReference type="PANTHER" id="PTHR45846">
    <property type="entry name" value="TRNA-DIHYDROURIDINE(47) SYNTHASE [NAD(P)(+)]-LIKE"/>
    <property type="match status" value="1"/>
</dbReference>
<dbReference type="PANTHER" id="PTHR45846:SF1">
    <property type="entry name" value="TRNA-DIHYDROURIDINE(47) SYNTHASE [NAD(P)(+)]-LIKE"/>
    <property type="match status" value="1"/>
</dbReference>
<dbReference type="Pfam" id="PF01207">
    <property type="entry name" value="Dus"/>
    <property type="match status" value="2"/>
</dbReference>
<dbReference type="SMART" id="SM00356">
    <property type="entry name" value="ZnF_C3H1"/>
    <property type="match status" value="2"/>
</dbReference>
<dbReference type="SUPFAM" id="SSF51395">
    <property type="entry name" value="FMN-linked oxidoreductases"/>
    <property type="match status" value="1"/>
</dbReference>
<dbReference type="PROSITE" id="PS01136">
    <property type="entry name" value="UPF0034"/>
    <property type="match status" value="1"/>
</dbReference>
<dbReference type="PROSITE" id="PS50103">
    <property type="entry name" value="ZF_C3H1"/>
    <property type="match status" value="2"/>
</dbReference>
<evidence type="ECO:0000250" key="1">
    <source>
        <dbReference type="UniProtKB" id="Q06053"/>
    </source>
</evidence>
<evidence type="ECO:0000250" key="2">
    <source>
        <dbReference type="UniProtKB" id="Q5SMC7"/>
    </source>
</evidence>
<evidence type="ECO:0000250" key="3">
    <source>
        <dbReference type="UniProtKB" id="Q9UTH9"/>
    </source>
</evidence>
<evidence type="ECO:0000255" key="4">
    <source>
        <dbReference type="PROSITE-ProRule" id="PRU00723"/>
    </source>
</evidence>
<evidence type="ECO:0000256" key="5">
    <source>
        <dbReference type="SAM" id="MobiDB-lite"/>
    </source>
</evidence>
<evidence type="ECO:0000305" key="6"/>
<feature type="chain" id="PRO_0000341599" description="tRNA-dihydrouridine(47) synthase [NAD(P)(+)]">
    <location>
        <begin position="1"/>
        <end position="766"/>
    </location>
</feature>
<feature type="zinc finger region" description="C3H1-type 1" evidence="4">
    <location>
        <begin position="97"/>
        <end position="126"/>
    </location>
</feature>
<feature type="zinc finger region" description="C3H1-type 2" evidence="4">
    <location>
        <begin position="216"/>
        <end position="241"/>
    </location>
</feature>
<feature type="region of interest" description="Disordered" evidence="5">
    <location>
        <begin position="17"/>
        <end position="93"/>
    </location>
</feature>
<feature type="region of interest" description="Disordered" evidence="5">
    <location>
        <begin position="183"/>
        <end position="203"/>
    </location>
</feature>
<feature type="compositionally biased region" description="Low complexity" evidence="5">
    <location>
        <begin position="188"/>
        <end position="203"/>
    </location>
</feature>
<feature type="active site" description="Proton donor" evidence="2">
    <location>
        <position position="488"/>
    </location>
</feature>
<feature type="binding site" evidence="2">
    <location>
        <begin position="401"/>
        <end position="403"/>
    </location>
    <ligand>
        <name>FMN</name>
        <dbReference type="ChEBI" id="CHEBI:58210"/>
    </ligand>
</feature>
<feature type="binding site" evidence="2">
    <location>
        <position position="455"/>
    </location>
    <ligand>
        <name>FMN</name>
        <dbReference type="ChEBI" id="CHEBI:58210"/>
    </ligand>
</feature>
<feature type="binding site" evidence="2">
    <location>
        <position position="528"/>
    </location>
    <ligand>
        <name>FMN</name>
        <dbReference type="ChEBI" id="CHEBI:58210"/>
    </ligand>
</feature>
<feature type="binding site" evidence="2">
    <location>
        <position position="558"/>
    </location>
    <ligand>
        <name>FMN</name>
        <dbReference type="ChEBI" id="CHEBI:58210"/>
    </ligand>
</feature>
<feature type="binding site" evidence="2">
    <location>
        <begin position="609"/>
        <end position="611"/>
    </location>
    <ligand>
        <name>FMN</name>
        <dbReference type="ChEBI" id="CHEBI:58210"/>
    </ligand>
</feature>
<feature type="binding site" evidence="2">
    <location>
        <begin position="633"/>
        <end position="634"/>
    </location>
    <ligand>
        <name>FMN</name>
        <dbReference type="ChEBI" id="CHEBI:58210"/>
    </ligand>
</feature>
<name>DUS3_MALGO</name>
<protein>
    <recommendedName>
        <fullName>tRNA-dihydrouridine(47) synthase [NAD(P)(+)]</fullName>
        <ecNumber evidence="1">1.3.1.89</ecNumber>
    </recommendedName>
    <alternativeName>
        <fullName>mRNA-dihydrouridine synthase DUS3</fullName>
        <ecNumber evidence="3">1.3.1.-</ecNumber>
    </alternativeName>
    <alternativeName>
        <fullName>tRNA-dihydrouridine synthase 3</fullName>
    </alternativeName>
</protein>
<keyword id="KW-0963">Cytoplasm</keyword>
<keyword id="KW-0285">Flavoprotein</keyword>
<keyword id="KW-0288">FMN</keyword>
<keyword id="KW-0479">Metal-binding</keyword>
<keyword id="KW-0507">mRNA processing</keyword>
<keyword id="KW-0520">NAD</keyword>
<keyword id="KW-0521">NADP</keyword>
<keyword id="KW-0539">Nucleus</keyword>
<keyword id="KW-0560">Oxidoreductase</keyword>
<keyword id="KW-1185">Reference proteome</keyword>
<keyword id="KW-0677">Repeat</keyword>
<keyword id="KW-0819">tRNA processing</keyword>
<keyword id="KW-0862">Zinc</keyword>
<keyword id="KW-0863">Zinc-finger</keyword>
<organism>
    <name type="scientific">Malassezia globosa (strain ATCC MYA-4612 / CBS 7966)</name>
    <name type="common">Dandruff-associated fungus</name>
    <dbReference type="NCBI Taxonomy" id="425265"/>
    <lineage>
        <taxon>Eukaryota</taxon>
        <taxon>Fungi</taxon>
        <taxon>Dikarya</taxon>
        <taxon>Basidiomycota</taxon>
        <taxon>Ustilaginomycotina</taxon>
        <taxon>Malasseziomycetes</taxon>
        <taxon>Malasseziales</taxon>
        <taxon>Malasseziaceae</taxon>
        <taxon>Malassezia</taxon>
    </lineage>
</organism>
<comment type="function">
    <text evidence="1 3">Catalyzes the synthesis of dihydrouridine, a modified base found in the D-loop of most tRNAs. Specifically modifies U47 in cytoplasmic tRNAs (By similarity). Catalyzes the synthesis of dihydrouridine in some mRNAs, thereby affecting their translation (By similarity).</text>
</comment>
<comment type="catalytic activity">
    <reaction evidence="1">
        <text>5,6-dihydrouridine(47) in tRNA + NAD(+) = uridine(47) in tRNA + NADH + H(+)</text>
        <dbReference type="Rhea" id="RHEA:53364"/>
        <dbReference type="Rhea" id="RHEA-COMP:13539"/>
        <dbReference type="Rhea" id="RHEA-COMP:13540"/>
        <dbReference type="ChEBI" id="CHEBI:15378"/>
        <dbReference type="ChEBI" id="CHEBI:57540"/>
        <dbReference type="ChEBI" id="CHEBI:57945"/>
        <dbReference type="ChEBI" id="CHEBI:65315"/>
        <dbReference type="ChEBI" id="CHEBI:74443"/>
        <dbReference type="EC" id="1.3.1.89"/>
    </reaction>
    <physiologicalReaction direction="right-to-left" evidence="1">
        <dbReference type="Rhea" id="RHEA:53366"/>
    </physiologicalReaction>
</comment>
<comment type="catalytic activity">
    <reaction evidence="1">
        <text>5,6-dihydrouridine(47) in tRNA + NADP(+) = uridine(47) in tRNA + NADPH + H(+)</text>
        <dbReference type="Rhea" id="RHEA:53360"/>
        <dbReference type="Rhea" id="RHEA-COMP:13539"/>
        <dbReference type="Rhea" id="RHEA-COMP:13540"/>
        <dbReference type="ChEBI" id="CHEBI:15378"/>
        <dbReference type="ChEBI" id="CHEBI:57783"/>
        <dbReference type="ChEBI" id="CHEBI:58349"/>
        <dbReference type="ChEBI" id="CHEBI:65315"/>
        <dbReference type="ChEBI" id="CHEBI:74443"/>
        <dbReference type="EC" id="1.3.1.89"/>
    </reaction>
    <physiologicalReaction direction="right-to-left" evidence="1">
        <dbReference type="Rhea" id="RHEA:53362"/>
    </physiologicalReaction>
</comment>
<comment type="catalytic activity">
    <reaction evidence="3">
        <text>a 5,6-dihydrouridine in mRNA + NAD(+) = a uridine in mRNA + NADH + H(+)</text>
        <dbReference type="Rhea" id="RHEA:69851"/>
        <dbReference type="Rhea" id="RHEA-COMP:14658"/>
        <dbReference type="Rhea" id="RHEA-COMP:17789"/>
        <dbReference type="ChEBI" id="CHEBI:15378"/>
        <dbReference type="ChEBI" id="CHEBI:57540"/>
        <dbReference type="ChEBI" id="CHEBI:57945"/>
        <dbReference type="ChEBI" id="CHEBI:65315"/>
        <dbReference type="ChEBI" id="CHEBI:74443"/>
    </reaction>
    <physiologicalReaction direction="right-to-left" evidence="3">
        <dbReference type="Rhea" id="RHEA:69853"/>
    </physiologicalReaction>
</comment>
<comment type="catalytic activity">
    <reaction evidence="3">
        <text>a 5,6-dihydrouridine in mRNA + NADP(+) = a uridine in mRNA + NADPH + H(+)</text>
        <dbReference type="Rhea" id="RHEA:69855"/>
        <dbReference type="Rhea" id="RHEA-COMP:14658"/>
        <dbReference type="Rhea" id="RHEA-COMP:17789"/>
        <dbReference type="ChEBI" id="CHEBI:15378"/>
        <dbReference type="ChEBI" id="CHEBI:57783"/>
        <dbReference type="ChEBI" id="CHEBI:58349"/>
        <dbReference type="ChEBI" id="CHEBI:65315"/>
        <dbReference type="ChEBI" id="CHEBI:74443"/>
    </reaction>
    <physiologicalReaction direction="right-to-left" evidence="3">
        <dbReference type="Rhea" id="RHEA:69857"/>
    </physiologicalReaction>
</comment>
<comment type="cofactor">
    <cofactor evidence="2">
        <name>FMN</name>
        <dbReference type="ChEBI" id="CHEBI:58210"/>
    </cofactor>
</comment>
<comment type="subcellular location">
    <subcellularLocation>
        <location evidence="1">Cytoplasm</location>
    </subcellularLocation>
    <subcellularLocation>
        <location evidence="1">Nucleus</location>
    </subcellularLocation>
</comment>
<comment type="similarity">
    <text evidence="6">Belongs to the Dus family. Dus3 subfamily.</text>
</comment>
<gene>
    <name type="primary">DUS3</name>
    <name type="ORF">MGL_0420</name>
</gene>
<proteinExistence type="inferred from homology"/>
<reference key="1">
    <citation type="journal article" date="2007" name="Proc. Natl. Acad. Sci. U.S.A.">
        <title>Dandruff-associated Malassezia genomes reveal convergent and divergent virulence traits shared with plant and human fungal pathogens.</title>
        <authorList>
            <person name="Xu J."/>
            <person name="Saunders C.W."/>
            <person name="Hu P."/>
            <person name="Grant R.A."/>
            <person name="Boekhout T."/>
            <person name="Kuramae E.E."/>
            <person name="Kronstad J.W."/>
            <person name="DeAngelis Y.M."/>
            <person name="Reeder N.L."/>
            <person name="Johnstone K.R."/>
            <person name="Leland M."/>
            <person name="Fieno A.M."/>
            <person name="Begley W.M."/>
            <person name="Sun Y."/>
            <person name="Lacey M.P."/>
            <person name="Chaudhary T."/>
            <person name="Keough T."/>
            <person name="Chu L."/>
            <person name="Sears R."/>
            <person name="Yuan B."/>
            <person name="Dawson T.L. Jr."/>
        </authorList>
    </citation>
    <scope>NUCLEOTIDE SEQUENCE [LARGE SCALE GENOMIC DNA]</scope>
    <source>
        <strain>ATCC MYA-4612 / CBS 7966</strain>
    </source>
</reference>
<accession>A8PTG4</accession>